<proteinExistence type="inferred from homology"/>
<organism>
    <name type="scientific">Salmonella typhimurium (strain LT2 / SGSC1412 / ATCC 700720)</name>
    <dbReference type="NCBI Taxonomy" id="99287"/>
    <lineage>
        <taxon>Bacteria</taxon>
        <taxon>Pseudomonadati</taxon>
        <taxon>Pseudomonadota</taxon>
        <taxon>Gammaproteobacteria</taxon>
        <taxon>Enterobacterales</taxon>
        <taxon>Enterobacteriaceae</taxon>
        <taxon>Salmonella</taxon>
    </lineage>
</organism>
<dbReference type="EC" id="1.6.5.2" evidence="1"/>
<dbReference type="EMBL" id="AE006468">
    <property type="protein sequence ID" value="AAL19049.1"/>
    <property type="molecule type" value="Genomic_DNA"/>
</dbReference>
<dbReference type="RefSeq" id="WP_000600709.1">
    <property type="nucleotide sequence ID" value="NC_003197.2"/>
</dbReference>
<dbReference type="SMR" id="Q8ZRW3"/>
<dbReference type="STRING" id="99287.STM0085"/>
<dbReference type="PaxDb" id="99287-STM0085"/>
<dbReference type="KEGG" id="stm:STM0085"/>
<dbReference type="PATRIC" id="fig|99287.12.peg.88"/>
<dbReference type="HOGENOM" id="CLU_058643_0_2_6"/>
<dbReference type="OMA" id="IWQHPMQ"/>
<dbReference type="PhylomeDB" id="Q8ZRW3"/>
<dbReference type="BioCyc" id="SENT99287:STM0085-MONOMER"/>
<dbReference type="Proteomes" id="UP000001014">
    <property type="component" value="Chromosome"/>
</dbReference>
<dbReference type="GO" id="GO:0005886">
    <property type="term" value="C:plasma membrane"/>
    <property type="evidence" value="ECO:0007669"/>
    <property type="project" value="UniProtKB-SubCell"/>
</dbReference>
<dbReference type="GO" id="GO:0009055">
    <property type="term" value="F:electron transfer activity"/>
    <property type="evidence" value="ECO:0000318"/>
    <property type="project" value="GO_Central"/>
</dbReference>
<dbReference type="GO" id="GO:0010181">
    <property type="term" value="F:FMN binding"/>
    <property type="evidence" value="ECO:0000318"/>
    <property type="project" value="GO_Central"/>
</dbReference>
<dbReference type="GO" id="GO:0003955">
    <property type="term" value="F:NAD(P)H dehydrogenase (quinone) activity"/>
    <property type="evidence" value="ECO:0000318"/>
    <property type="project" value="GO_Central"/>
</dbReference>
<dbReference type="GO" id="GO:0050136">
    <property type="term" value="F:NADH:ubiquinone reductase (non-electrogenic) activity"/>
    <property type="evidence" value="ECO:0007669"/>
    <property type="project" value="RHEA"/>
</dbReference>
<dbReference type="GO" id="GO:0008753">
    <property type="term" value="F:NADPH dehydrogenase (quinone) activity"/>
    <property type="evidence" value="ECO:0007669"/>
    <property type="project" value="RHEA"/>
</dbReference>
<dbReference type="GO" id="GO:1901381">
    <property type="term" value="P:positive regulation of potassium ion transmembrane transport"/>
    <property type="evidence" value="ECO:0007669"/>
    <property type="project" value="UniProtKB-UniRule"/>
</dbReference>
<dbReference type="GO" id="GO:0006813">
    <property type="term" value="P:potassium ion transport"/>
    <property type="evidence" value="ECO:0007669"/>
    <property type="project" value="InterPro"/>
</dbReference>
<dbReference type="FunFam" id="3.40.50.360:FF:000008">
    <property type="entry name" value="Glutathione-regulated potassium-efflux system ancillary protein KefF"/>
    <property type="match status" value="1"/>
</dbReference>
<dbReference type="Gene3D" id="3.40.50.360">
    <property type="match status" value="1"/>
</dbReference>
<dbReference type="HAMAP" id="MF_01414">
    <property type="entry name" value="K_H_efflux_KefF"/>
    <property type="match status" value="1"/>
</dbReference>
<dbReference type="InterPro" id="IPR003680">
    <property type="entry name" value="Flavodoxin_fold"/>
</dbReference>
<dbReference type="InterPro" id="IPR029039">
    <property type="entry name" value="Flavoprotein-like_sf"/>
</dbReference>
<dbReference type="InterPro" id="IPR023948">
    <property type="entry name" value="K_H_efflux_KefF"/>
</dbReference>
<dbReference type="InterPro" id="IPR046980">
    <property type="entry name" value="KefG/KefF"/>
</dbReference>
<dbReference type="NCBIfam" id="NF002044">
    <property type="entry name" value="PRK00871.1"/>
    <property type="match status" value="1"/>
</dbReference>
<dbReference type="PANTHER" id="PTHR47307:SF2">
    <property type="entry name" value="GLUTATHIONE-REGULATED POTASSIUM-EFFLUX SYSTEM ANCILLARY PROTEIN KEFF"/>
    <property type="match status" value="1"/>
</dbReference>
<dbReference type="PANTHER" id="PTHR47307">
    <property type="entry name" value="GLUTATHIONE-REGULATED POTASSIUM-EFFLUX SYSTEM ANCILLARY PROTEIN KEFG"/>
    <property type="match status" value="1"/>
</dbReference>
<dbReference type="Pfam" id="PF02525">
    <property type="entry name" value="Flavodoxin_2"/>
    <property type="match status" value="1"/>
</dbReference>
<dbReference type="SUPFAM" id="SSF52218">
    <property type="entry name" value="Flavoproteins"/>
    <property type="match status" value="1"/>
</dbReference>
<reference key="1">
    <citation type="journal article" date="2001" name="Nature">
        <title>Complete genome sequence of Salmonella enterica serovar Typhimurium LT2.</title>
        <authorList>
            <person name="McClelland M."/>
            <person name="Sanderson K.E."/>
            <person name="Spieth J."/>
            <person name="Clifton S.W."/>
            <person name="Latreille P."/>
            <person name="Courtney L."/>
            <person name="Porwollik S."/>
            <person name="Ali J."/>
            <person name="Dante M."/>
            <person name="Du F."/>
            <person name="Hou S."/>
            <person name="Layman D."/>
            <person name="Leonard S."/>
            <person name="Nguyen C."/>
            <person name="Scott K."/>
            <person name="Holmes A."/>
            <person name="Grewal N."/>
            <person name="Mulvaney E."/>
            <person name="Ryan E."/>
            <person name="Sun H."/>
            <person name="Florea L."/>
            <person name="Miller W."/>
            <person name="Stoneking T."/>
            <person name="Nhan M."/>
            <person name="Waterston R."/>
            <person name="Wilson R.K."/>
        </authorList>
    </citation>
    <scope>NUCLEOTIDE SEQUENCE [LARGE SCALE GENOMIC DNA]</scope>
    <source>
        <strain>LT2 / SGSC1412 / ATCC 700720</strain>
    </source>
</reference>
<accession>Q8ZRW3</accession>
<sequence length="176" mass="20005">MILIIYAHPYPHHSHANKRMLEQAGTLENVEIRSLYHLYPDFNIDVAAEQEALSRASLIVWQHPMQWYSVPPLLKLWMDKVLTHGWAYGHGGTALHGKHLLWAVTTGGGENHFAIGSHPGFDVLSQPLQATALYCGLKWLSPFAMHCTFICDDDTLQAQARQYKQRLLAWQEVNHG</sequence>
<protein>
    <recommendedName>
        <fullName evidence="1">Glutathione-regulated potassium-efflux system ancillary protein KefF</fullName>
    </recommendedName>
    <alternativeName>
        <fullName evidence="1">Quinone oxidoreductase KefF</fullName>
        <ecNumber evidence="1">1.6.5.2</ecNumber>
    </alternativeName>
</protein>
<keyword id="KW-0997">Cell inner membrane</keyword>
<keyword id="KW-1003">Cell membrane</keyword>
<keyword id="KW-0285">Flavoprotein</keyword>
<keyword id="KW-0288">FMN</keyword>
<keyword id="KW-0472">Membrane</keyword>
<keyword id="KW-0520">NAD</keyword>
<keyword id="KW-0560">Oxidoreductase</keyword>
<keyword id="KW-1185">Reference proteome</keyword>
<evidence type="ECO:0000255" key="1">
    <source>
        <dbReference type="HAMAP-Rule" id="MF_01414"/>
    </source>
</evidence>
<comment type="function">
    <text evidence="1">Regulatory subunit of a potassium efflux system that confers protection against electrophiles. Required for full activity of KefC. Shows redox enzymatic activity, but this enzymatic activity is not required for activation of KefC.</text>
</comment>
<comment type="catalytic activity">
    <reaction evidence="1">
        <text>a quinone + NADH + H(+) = a quinol + NAD(+)</text>
        <dbReference type="Rhea" id="RHEA:46160"/>
        <dbReference type="ChEBI" id="CHEBI:15378"/>
        <dbReference type="ChEBI" id="CHEBI:24646"/>
        <dbReference type="ChEBI" id="CHEBI:57540"/>
        <dbReference type="ChEBI" id="CHEBI:57945"/>
        <dbReference type="ChEBI" id="CHEBI:132124"/>
        <dbReference type="EC" id="1.6.5.2"/>
    </reaction>
</comment>
<comment type="catalytic activity">
    <reaction evidence="1">
        <text>a quinone + NADPH + H(+) = a quinol + NADP(+)</text>
        <dbReference type="Rhea" id="RHEA:46164"/>
        <dbReference type="ChEBI" id="CHEBI:15378"/>
        <dbReference type="ChEBI" id="CHEBI:24646"/>
        <dbReference type="ChEBI" id="CHEBI:57783"/>
        <dbReference type="ChEBI" id="CHEBI:58349"/>
        <dbReference type="ChEBI" id="CHEBI:132124"/>
        <dbReference type="EC" id="1.6.5.2"/>
    </reaction>
</comment>
<comment type="cofactor">
    <cofactor evidence="1">
        <name>FMN</name>
        <dbReference type="ChEBI" id="CHEBI:58210"/>
    </cofactor>
</comment>
<comment type="subunit">
    <text evidence="1">Homodimer. Interacts with KefC.</text>
</comment>
<comment type="subcellular location">
    <subcellularLocation>
        <location evidence="1">Cell inner membrane</location>
        <topology evidence="1">Peripheral membrane protein</topology>
        <orientation evidence="1">Cytoplasmic side</orientation>
    </subcellularLocation>
</comment>
<comment type="similarity">
    <text evidence="1">Belongs to the NAD(P)H dehydrogenase (quinone) family. KefF subfamily.</text>
</comment>
<gene>
    <name evidence="1" type="primary">kefF</name>
    <name type="ordered locus">STM0085</name>
</gene>
<feature type="chain" id="PRO_0000071640" description="Glutathione-regulated potassium-efflux system ancillary protein KefF">
    <location>
        <begin position="1"/>
        <end position="176"/>
    </location>
</feature>
<feature type="binding site" evidence="1">
    <location>
        <position position="8"/>
    </location>
    <ligand>
        <name>FMN</name>
        <dbReference type="ChEBI" id="CHEBI:58210"/>
    </ligand>
</feature>
<feature type="binding site" evidence="1">
    <location>
        <begin position="14"/>
        <end position="17"/>
    </location>
    <ligand>
        <name>FMN</name>
        <dbReference type="ChEBI" id="CHEBI:58210"/>
    </ligand>
</feature>
<feature type="binding site" evidence="1">
    <location>
        <begin position="65"/>
        <end position="68"/>
    </location>
    <ligand>
        <name>FMN</name>
        <dbReference type="ChEBI" id="CHEBI:58210"/>
    </ligand>
</feature>
<feature type="binding site" evidence="1">
    <location>
        <begin position="105"/>
        <end position="108"/>
    </location>
    <ligand>
        <name>FMN</name>
        <dbReference type="ChEBI" id="CHEBI:58210"/>
    </ligand>
</feature>
<name>KEFF_SALTY</name>